<accession>Q93ZQ5</accession>
<accession>O82747</accession>
<sequence>MVAFGKKLKERSIQEWQGYYINYKLMKKKVKQYSRQLEGGNLERRHVLKDFSRMLDNQIEKIALFMLEQQGLLASRLQTLRGSHDALQEQPDISHMSYLKEEYRAVGQDLLKLLFFVEMNAIGIRKILKKFDKRFGYRFTNYYVKTRANHPYSELQQVFRHVGLGAVVGAVSRNLHELQNNQGSYLSIYDQPVLPLQDPVVDSIRAAVDRLTRSTNFLHFMAQHALIMQEELPSPQDEEGEEEDGRYHFMSLLLNLVNTFLYMVNTYIIVPTADDYSMSLGAAATVCGVVIGAMAVAQLFSSVYFSAWSNRSYFKPLIFSSIVLFIGNLLYALAFDFNSIAVLLIGRLFCGLGSARAVNRRYISDCVPLKIRMQASAGFVSASALGMACGPALAGLLQIRFKIYKLTFNQDTLPGWVMAVAWLIYLVWLAISFREPAREPEEIPKTSEESNHSAVQDVNLEKGMKQPLLLTSEEIEEQGEDECDGSEEASEDSRTPANSILAAYRLLTPSVKVQLLIYFMLKYAMEILLSESSVITTYYFGWSTSSVAIFLFCLGLTVLPVNLVVGSYISNMFEDRQILLVSEIMVCVGILLSFHVVVPYTVPQYVCSGLIMFVSAEVLEGVNLSLLSRVMSSRLSRGTYNGGLLSTEAGTIARVIADATITVAGFFGRNMLLNVTLLPSLVICVLSIVATCFTYNSLY</sequence>
<organism>
    <name type="scientific">Arabidopsis thaliana</name>
    <name type="common">Mouse-ear cress</name>
    <dbReference type="NCBI Taxonomy" id="3702"/>
    <lineage>
        <taxon>Eukaryota</taxon>
        <taxon>Viridiplantae</taxon>
        <taxon>Streptophyta</taxon>
        <taxon>Embryophyta</taxon>
        <taxon>Tracheophyta</taxon>
        <taxon>Spermatophyta</taxon>
        <taxon>Magnoliopsida</taxon>
        <taxon>eudicotyledons</taxon>
        <taxon>Gunneridae</taxon>
        <taxon>Pentapetalae</taxon>
        <taxon>rosids</taxon>
        <taxon>malvids</taxon>
        <taxon>Brassicales</taxon>
        <taxon>Brassicaceae</taxon>
        <taxon>Camelineae</taxon>
        <taxon>Arabidopsis</taxon>
    </lineage>
</organism>
<reference key="1">
    <citation type="journal article" date="1999" name="Nature">
        <title>Sequence and analysis of chromosome 4 of the plant Arabidopsis thaliana.</title>
        <authorList>
            <person name="Mayer K.F.X."/>
            <person name="Schueller C."/>
            <person name="Wambutt R."/>
            <person name="Murphy G."/>
            <person name="Volckaert G."/>
            <person name="Pohl T."/>
            <person name="Duesterhoeft A."/>
            <person name="Stiekema W."/>
            <person name="Entian K.-D."/>
            <person name="Terryn N."/>
            <person name="Harris B."/>
            <person name="Ansorge W."/>
            <person name="Brandt P."/>
            <person name="Grivell L.A."/>
            <person name="Rieger M."/>
            <person name="Weichselgartner M."/>
            <person name="de Simone V."/>
            <person name="Obermaier B."/>
            <person name="Mache R."/>
            <person name="Mueller M."/>
            <person name="Kreis M."/>
            <person name="Delseny M."/>
            <person name="Puigdomenech P."/>
            <person name="Watson M."/>
            <person name="Schmidtheini T."/>
            <person name="Reichert B."/>
            <person name="Portetelle D."/>
            <person name="Perez-Alonso M."/>
            <person name="Boutry M."/>
            <person name="Bancroft I."/>
            <person name="Vos P."/>
            <person name="Hoheisel J."/>
            <person name="Zimmermann W."/>
            <person name="Wedler H."/>
            <person name="Ridley P."/>
            <person name="Langham S.-A."/>
            <person name="McCullagh B."/>
            <person name="Bilham L."/>
            <person name="Robben J."/>
            <person name="van der Schueren J."/>
            <person name="Grymonprez B."/>
            <person name="Chuang Y.-J."/>
            <person name="Vandenbussche F."/>
            <person name="Braeken M."/>
            <person name="Weltjens I."/>
            <person name="Voet M."/>
            <person name="Bastiaens I."/>
            <person name="Aert R."/>
            <person name="Defoor E."/>
            <person name="Weitzenegger T."/>
            <person name="Bothe G."/>
            <person name="Ramsperger U."/>
            <person name="Hilbert H."/>
            <person name="Braun M."/>
            <person name="Holzer E."/>
            <person name="Brandt A."/>
            <person name="Peters S."/>
            <person name="van Staveren M."/>
            <person name="Dirkse W."/>
            <person name="Mooijman P."/>
            <person name="Klein Lankhorst R."/>
            <person name="Rose M."/>
            <person name="Hauf J."/>
            <person name="Koetter P."/>
            <person name="Berneiser S."/>
            <person name="Hempel S."/>
            <person name="Feldpausch M."/>
            <person name="Lamberth S."/>
            <person name="Van den Daele H."/>
            <person name="De Keyser A."/>
            <person name="Buysshaert C."/>
            <person name="Gielen J."/>
            <person name="Villarroel R."/>
            <person name="De Clercq R."/>
            <person name="van Montagu M."/>
            <person name="Rogers J."/>
            <person name="Cronin A."/>
            <person name="Quail M.A."/>
            <person name="Bray-Allen S."/>
            <person name="Clark L."/>
            <person name="Doggett J."/>
            <person name="Hall S."/>
            <person name="Kay M."/>
            <person name="Lennard N."/>
            <person name="McLay K."/>
            <person name="Mayes R."/>
            <person name="Pettett A."/>
            <person name="Rajandream M.A."/>
            <person name="Lyne M."/>
            <person name="Benes V."/>
            <person name="Rechmann S."/>
            <person name="Borkova D."/>
            <person name="Bloecker H."/>
            <person name="Scharfe M."/>
            <person name="Grimm M."/>
            <person name="Loehnert T.-H."/>
            <person name="Dose S."/>
            <person name="de Haan M."/>
            <person name="Maarse A.C."/>
            <person name="Schaefer M."/>
            <person name="Mueller-Auer S."/>
            <person name="Gabel C."/>
            <person name="Fuchs M."/>
            <person name="Fartmann B."/>
            <person name="Granderath K."/>
            <person name="Dauner D."/>
            <person name="Herzl A."/>
            <person name="Neumann S."/>
            <person name="Argiriou A."/>
            <person name="Vitale D."/>
            <person name="Liguori R."/>
            <person name="Piravandi E."/>
            <person name="Massenet O."/>
            <person name="Quigley F."/>
            <person name="Clabauld G."/>
            <person name="Muendlein A."/>
            <person name="Felber R."/>
            <person name="Schnabl S."/>
            <person name="Hiller R."/>
            <person name="Schmidt W."/>
            <person name="Lecharny A."/>
            <person name="Aubourg S."/>
            <person name="Chefdor F."/>
            <person name="Cooke R."/>
            <person name="Berger C."/>
            <person name="Monfort A."/>
            <person name="Casacuberta E."/>
            <person name="Gibbons T."/>
            <person name="Weber N."/>
            <person name="Vandenbol M."/>
            <person name="Bargues M."/>
            <person name="Terol J."/>
            <person name="Torres A."/>
            <person name="Perez-Perez A."/>
            <person name="Purnelle B."/>
            <person name="Bent E."/>
            <person name="Johnson S."/>
            <person name="Tacon D."/>
            <person name="Jesse T."/>
            <person name="Heijnen L."/>
            <person name="Schwarz S."/>
            <person name="Scholler P."/>
            <person name="Heber S."/>
            <person name="Francs P."/>
            <person name="Bielke C."/>
            <person name="Frishman D."/>
            <person name="Haase D."/>
            <person name="Lemcke K."/>
            <person name="Mewes H.-W."/>
            <person name="Stocker S."/>
            <person name="Zaccaria P."/>
            <person name="Bevan M."/>
            <person name="Wilson R.K."/>
            <person name="de la Bastide M."/>
            <person name="Habermann K."/>
            <person name="Parnell L."/>
            <person name="Dedhia N."/>
            <person name="Gnoj L."/>
            <person name="Schutz K."/>
            <person name="Huang E."/>
            <person name="Spiegel L."/>
            <person name="Sekhon M."/>
            <person name="Murray J."/>
            <person name="Sheet P."/>
            <person name="Cordes M."/>
            <person name="Abu-Threideh J."/>
            <person name="Stoneking T."/>
            <person name="Kalicki J."/>
            <person name="Graves T."/>
            <person name="Harmon G."/>
            <person name="Edwards J."/>
            <person name="Latreille P."/>
            <person name="Courtney L."/>
            <person name="Cloud J."/>
            <person name="Abbott A."/>
            <person name="Scott K."/>
            <person name="Johnson D."/>
            <person name="Minx P."/>
            <person name="Bentley D."/>
            <person name="Fulton B."/>
            <person name="Miller N."/>
            <person name="Greco T."/>
            <person name="Kemp K."/>
            <person name="Kramer J."/>
            <person name="Fulton L."/>
            <person name="Mardis E."/>
            <person name="Dante M."/>
            <person name="Pepin K."/>
            <person name="Hillier L.W."/>
            <person name="Nelson J."/>
            <person name="Spieth J."/>
            <person name="Ryan E."/>
            <person name="Andrews S."/>
            <person name="Geisel C."/>
            <person name="Layman D."/>
            <person name="Du H."/>
            <person name="Ali J."/>
            <person name="Berghoff A."/>
            <person name="Jones K."/>
            <person name="Drone K."/>
            <person name="Cotton M."/>
            <person name="Joshu C."/>
            <person name="Antonoiu B."/>
            <person name="Zidanic M."/>
            <person name="Strong C."/>
            <person name="Sun H."/>
            <person name="Lamar B."/>
            <person name="Yordan C."/>
            <person name="Ma P."/>
            <person name="Zhong J."/>
            <person name="Preston R."/>
            <person name="Vil D."/>
            <person name="Shekher M."/>
            <person name="Matero A."/>
            <person name="Shah R."/>
            <person name="Swaby I.K."/>
            <person name="O'Shaughnessy A."/>
            <person name="Rodriguez M."/>
            <person name="Hoffman J."/>
            <person name="Till S."/>
            <person name="Granat S."/>
            <person name="Shohdy N."/>
            <person name="Hasegawa A."/>
            <person name="Hameed A."/>
            <person name="Lodhi M."/>
            <person name="Johnson A."/>
            <person name="Chen E."/>
            <person name="Marra M.A."/>
            <person name="Martienssen R."/>
            <person name="McCombie W.R."/>
        </authorList>
    </citation>
    <scope>NUCLEOTIDE SEQUENCE [LARGE SCALE GENOMIC DNA]</scope>
    <source>
        <strain>cv. Columbia</strain>
    </source>
</reference>
<reference key="2">
    <citation type="journal article" date="2017" name="Plant J.">
        <title>Araport11: a complete reannotation of the Arabidopsis thaliana reference genome.</title>
        <authorList>
            <person name="Cheng C.Y."/>
            <person name="Krishnakumar V."/>
            <person name="Chan A.P."/>
            <person name="Thibaud-Nissen F."/>
            <person name="Schobel S."/>
            <person name="Town C.D."/>
        </authorList>
    </citation>
    <scope>GENOME REANNOTATION</scope>
    <source>
        <strain>cv. Columbia</strain>
    </source>
</reference>
<reference key="3">
    <citation type="journal article" date="2003" name="Science">
        <title>Empirical analysis of transcriptional activity in the Arabidopsis genome.</title>
        <authorList>
            <person name="Yamada K."/>
            <person name="Lim J."/>
            <person name="Dale J.M."/>
            <person name="Chen H."/>
            <person name="Shinn P."/>
            <person name="Palm C.J."/>
            <person name="Southwick A.M."/>
            <person name="Wu H.C."/>
            <person name="Kim C.J."/>
            <person name="Nguyen M."/>
            <person name="Pham P.K."/>
            <person name="Cheuk R.F."/>
            <person name="Karlin-Newmann G."/>
            <person name="Liu S.X."/>
            <person name="Lam B."/>
            <person name="Sakano H."/>
            <person name="Wu T."/>
            <person name="Yu G."/>
            <person name="Miranda M."/>
            <person name="Quach H.L."/>
            <person name="Tripp M."/>
            <person name="Chang C.H."/>
            <person name="Lee J.M."/>
            <person name="Toriumi M.J."/>
            <person name="Chan M.M."/>
            <person name="Tang C.C."/>
            <person name="Onodera C.S."/>
            <person name="Deng J.M."/>
            <person name="Akiyama K."/>
            <person name="Ansari Y."/>
            <person name="Arakawa T."/>
            <person name="Banh J."/>
            <person name="Banno F."/>
            <person name="Bowser L."/>
            <person name="Brooks S.Y."/>
            <person name="Carninci P."/>
            <person name="Chao Q."/>
            <person name="Choy N."/>
            <person name="Enju A."/>
            <person name="Goldsmith A.D."/>
            <person name="Gurjal M."/>
            <person name="Hansen N.F."/>
            <person name="Hayashizaki Y."/>
            <person name="Johnson-Hopson C."/>
            <person name="Hsuan V.W."/>
            <person name="Iida K."/>
            <person name="Karnes M."/>
            <person name="Khan S."/>
            <person name="Koesema E."/>
            <person name="Ishida J."/>
            <person name="Jiang P.X."/>
            <person name="Jones T."/>
            <person name="Kawai J."/>
            <person name="Kamiya A."/>
            <person name="Meyers C."/>
            <person name="Nakajima M."/>
            <person name="Narusaka M."/>
            <person name="Seki M."/>
            <person name="Sakurai T."/>
            <person name="Satou M."/>
            <person name="Tamse R."/>
            <person name="Vaysberg M."/>
            <person name="Wallender E.K."/>
            <person name="Wong C."/>
            <person name="Yamamura Y."/>
            <person name="Yuan S."/>
            <person name="Shinozaki K."/>
            <person name="Davis R.W."/>
            <person name="Theologis A."/>
            <person name="Ecker J.R."/>
        </authorList>
    </citation>
    <scope>NUCLEOTIDE SEQUENCE [LARGE SCALE MRNA]</scope>
    <source>
        <strain>cv. Columbia</strain>
    </source>
</reference>
<protein>
    <recommendedName>
        <fullName>SPX domain-containing membrane protein At4g22990</fullName>
    </recommendedName>
</protein>
<evidence type="ECO:0000255" key="1"/>
<evidence type="ECO:0000255" key="2">
    <source>
        <dbReference type="PROSITE-ProRule" id="PRU00714"/>
    </source>
</evidence>
<evidence type="ECO:0000256" key="3">
    <source>
        <dbReference type="SAM" id="MobiDB-lite"/>
    </source>
</evidence>
<evidence type="ECO:0000305" key="4"/>
<feature type="chain" id="PRO_0000398569" description="SPX domain-containing membrane protein At4g22990">
    <location>
        <begin position="1"/>
        <end position="699"/>
    </location>
</feature>
<feature type="transmembrane region" description="Helical" evidence="1">
    <location>
        <begin position="249"/>
        <end position="269"/>
    </location>
</feature>
<feature type="transmembrane region" description="Helical" evidence="1">
    <location>
        <begin position="280"/>
        <end position="300"/>
    </location>
</feature>
<feature type="transmembrane region" description="Helical" evidence="1">
    <location>
        <begin position="317"/>
        <end position="337"/>
    </location>
</feature>
<feature type="transmembrane region" description="Helical" evidence="1">
    <location>
        <begin position="339"/>
        <end position="358"/>
    </location>
</feature>
<feature type="transmembrane region" description="Helical" evidence="1">
    <location>
        <begin position="377"/>
        <end position="397"/>
    </location>
</feature>
<feature type="transmembrane region" description="Helical" evidence="1">
    <location>
        <begin position="413"/>
        <end position="433"/>
    </location>
</feature>
<feature type="transmembrane region" description="Helical" evidence="1">
    <location>
        <begin position="515"/>
        <end position="535"/>
    </location>
</feature>
<feature type="transmembrane region" description="Helical" evidence="1">
    <location>
        <begin position="546"/>
        <end position="566"/>
    </location>
</feature>
<feature type="transmembrane region" description="Helical" evidence="1">
    <location>
        <begin position="578"/>
        <end position="598"/>
    </location>
</feature>
<feature type="transmembrane region" description="Helical" evidence="1">
    <location>
        <begin position="606"/>
        <end position="626"/>
    </location>
</feature>
<feature type="transmembrane region" description="Helical" evidence="1">
    <location>
        <begin position="671"/>
        <end position="691"/>
    </location>
</feature>
<feature type="domain" description="SPX" evidence="2">
    <location>
        <begin position="2"/>
        <end position="145"/>
    </location>
</feature>
<feature type="region of interest" description="Disordered" evidence="3">
    <location>
        <begin position="475"/>
        <end position="494"/>
    </location>
</feature>
<feature type="compositionally biased region" description="Acidic residues" evidence="3">
    <location>
        <begin position="475"/>
        <end position="490"/>
    </location>
</feature>
<feature type="sequence conflict" description="In Ref. 3; AAL08230." evidence="4" ref="3">
    <original>E</original>
    <variation>K</variation>
    <location>
        <position position="526"/>
    </location>
</feature>
<comment type="subcellular location">
    <subcellularLocation>
        <location evidence="4">Membrane</location>
        <topology evidence="4">Multi-pass membrane protein</topology>
    </subcellularLocation>
</comment>
<comment type="alternative products">
    <event type="alternative splicing"/>
    <isoform>
        <id>Q93ZQ5-1</id>
        <name>1</name>
        <sequence type="displayed"/>
    </isoform>
    <text>A number of isoforms are produced. According to EST sequences.</text>
</comment>
<comment type="similarity">
    <text evidence="4">Belongs to the major facilitator superfamily.</text>
</comment>
<comment type="sequence caution" evidence="4">
    <conflict type="erroneous gene model prediction">
        <sequence resource="EMBL-CDS" id="CAA19814"/>
    </conflict>
</comment>
<comment type="sequence caution" evidence="4">
    <conflict type="erroneous gene model prediction">
        <sequence resource="EMBL-CDS" id="CAB79254"/>
    </conflict>
</comment>
<keyword id="KW-0025">Alternative splicing</keyword>
<keyword id="KW-0472">Membrane</keyword>
<keyword id="KW-1185">Reference proteome</keyword>
<keyword id="KW-0812">Transmembrane</keyword>
<keyword id="KW-1133">Transmembrane helix</keyword>
<name>SPXM3_ARATH</name>
<gene>
    <name type="ordered locus">At4g22990</name>
    <name type="ORF">F7H19.170</name>
</gene>
<dbReference type="EMBL" id="AL031018">
    <property type="protein sequence ID" value="CAA19814.1"/>
    <property type="status" value="ALT_SEQ"/>
    <property type="molecule type" value="Genomic_DNA"/>
</dbReference>
<dbReference type="EMBL" id="AL161558">
    <property type="protein sequence ID" value="CAB79254.1"/>
    <property type="status" value="ALT_SEQ"/>
    <property type="molecule type" value="Genomic_DNA"/>
</dbReference>
<dbReference type="EMBL" id="CP002687">
    <property type="protein sequence ID" value="AEE84689.1"/>
    <property type="molecule type" value="Genomic_DNA"/>
</dbReference>
<dbReference type="EMBL" id="AY056374">
    <property type="protein sequence ID" value="AAL08230.1"/>
    <property type="molecule type" value="mRNA"/>
</dbReference>
<dbReference type="PIR" id="T05130">
    <property type="entry name" value="T05130"/>
</dbReference>
<dbReference type="RefSeq" id="NP_567674.1">
    <molecule id="Q93ZQ5-1"/>
    <property type="nucleotide sequence ID" value="NM_118428.3"/>
</dbReference>
<dbReference type="FunCoup" id="Q93ZQ5">
    <property type="interactions" value="1"/>
</dbReference>
<dbReference type="STRING" id="3702.Q93ZQ5"/>
<dbReference type="PaxDb" id="3702-AT4G22990.2"/>
<dbReference type="ProteomicsDB" id="245249">
    <molecule id="Q93ZQ5-1"/>
</dbReference>
<dbReference type="EnsemblPlants" id="AT4G22990.1">
    <molecule id="Q93ZQ5-1"/>
    <property type="protein sequence ID" value="AT4G22990.1"/>
    <property type="gene ID" value="AT4G22990"/>
</dbReference>
<dbReference type="GeneID" id="828398"/>
<dbReference type="Gramene" id="AT4G22990.1">
    <molecule id="Q93ZQ5-1"/>
    <property type="protein sequence ID" value="AT4G22990.1"/>
    <property type="gene ID" value="AT4G22990"/>
</dbReference>
<dbReference type="KEGG" id="ath:AT4G22990"/>
<dbReference type="Araport" id="AT4G22990"/>
<dbReference type="TAIR" id="AT4G22990">
    <property type="gene designation" value="PHT5"/>
</dbReference>
<dbReference type="eggNOG" id="KOG1161">
    <property type="taxonomic scope" value="Eukaryota"/>
</dbReference>
<dbReference type="eggNOG" id="KOG2325">
    <property type="taxonomic scope" value="Eukaryota"/>
</dbReference>
<dbReference type="HOGENOM" id="CLU_025236_1_0_1"/>
<dbReference type="InParanoid" id="Q93ZQ5"/>
<dbReference type="OrthoDB" id="5588846at2759"/>
<dbReference type="PhylomeDB" id="Q93ZQ5"/>
<dbReference type="PRO" id="PR:Q93ZQ5"/>
<dbReference type="Proteomes" id="UP000006548">
    <property type="component" value="Chromosome 4"/>
</dbReference>
<dbReference type="ExpressionAtlas" id="Q93ZQ5">
    <property type="expression patterns" value="baseline and differential"/>
</dbReference>
<dbReference type="GO" id="GO:0016020">
    <property type="term" value="C:membrane"/>
    <property type="evidence" value="ECO:0007669"/>
    <property type="project" value="UniProtKB-SubCell"/>
</dbReference>
<dbReference type="GO" id="GO:0022857">
    <property type="term" value="F:transmembrane transporter activity"/>
    <property type="evidence" value="ECO:0007669"/>
    <property type="project" value="InterPro"/>
</dbReference>
<dbReference type="CDD" id="cd14479">
    <property type="entry name" value="SPX-MFS_plant"/>
    <property type="match status" value="1"/>
</dbReference>
<dbReference type="Gene3D" id="1.20.1250.20">
    <property type="entry name" value="MFS general substrate transporter like domains"/>
    <property type="match status" value="1"/>
</dbReference>
<dbReference type="InterPro" id="IPR011701">
    <property type="entry name" value="MFS"/>
</dbReference>
<dbReference type="InterPro" id="IPR051068">
    <property type="entry name" value="MFS_Domain-Containing_Protein"/>
</dbReference>
<dbReference type="InterPro" id="IPR036259">
    <property type="entry name" value="MFS_trans_sf"/>
</dbReference>
<dbReference type="InterPro" id="IPR004331">
    <property type="entry name" value="SPX_dom"/>
</dbReference>
<dbReference type="InterPro" id="IPR045264">
    <property type="entry name" value="SPXM_SPX_plant"/>
</dbReference>
<dbReference type="PANTHER" id="PTHR23510">
    <property type="entry name" value="INNER MEMBRANE TRANSPORT PROTEIN YAJR"/>
    <property type="match status" value="1"/>
</dbReference>
<dbReference type="PANTHER" id="PTHR23510:SF71">
    <property type="entry name" value="SPX DOMAIN-CONTAINING PROTEIN"/>
    <property type="match status" value="1"/>
</dbReference>
<dbReference type="Pfam" id="PF07690">
    <property type="entry name" value="MFS_1"/>
    <property type="match status" value="1"/>
</dbReference>
<dbReference type="Pfam" id="PF03105">
    <property type="entry name" value="SPX"/>
    <property type="match status" value="1"/>
</dbReference>
<dbReference type="SUPFAM" id="SSF103473">
    <property type="entry name" value="MFS general substrate transporter"/>
    <property type="match status" value="1"/>
</dbReference>
<dbReference type="PROSITE" id="PS51382">
    <property type="entry name" value="SPX"/>
    <property type="match status" value="1"/>
</dbReference>
<proteinExistence type="evidence at transcript level"/>